<accession>Q7NBB0</accession>
<feature type="propeptide" id="PRO_0000459916" evidence="1">
    <location>
        <begin position="1"/>
        <end position="13"/>
    </location>
</feature>
<feature type="chain" id="PRO_0000181120" description="Large ribosomal subunit protein bL27">
    <location>
        <begin position="14"/>
        <end position="98"/>
    </location>
</feature>
<name>RL27_MYCGA</name>
<protein>
    <recommendedName>
        <fullName evidence="2">Large ribosomal subunit protein bL27</fullName>
    </recommendedName>
    <alternativeName>
        <fullName evidence="3">50S ribosomal protein L27</fullName>
    </alternativeName>
</protein>
<dbReference type="EMBL" id="AE015450">
    <property type="protein sequence ID" value="AAP56719.1"/>
    <property type="molecule type" value="Genomic_DNA"/>
</dbReference>
<dbReference type="RefSeq" id="WP_011113615.1">
    <property type="nucleotide sequence ID" value="NC_004829.2"/>
</dbReference>
<dbReference type="SMR" id="Q7NBB0"/>
<dbReference type="GeneID" id="93510199"/>
<dbReference type="KEGG" id="mga:MGA_1292"/>
<dbReference type="HOGENOM" id="CLU_095424_4_0_14"/>
<dbReference type="OrthoDB" id="9803474at2"/>
<dbReference type="Proteomes" id="UP000001418">
    <property type="component" value="Chromosome"/>
</dbReference>
<dbReference type="GO" id="GO:0022625">
    <property type="term" value="C:cytosolic large ribosomal subunit"/>
    <property type="evidence" value="ECO:0007669"/>
    <property type="project" value="TreeGrafter"/>
</dbReference>
<dbReference type="GO" id="GO:0003735">
    <property type="term" value="F:structural constituent of ribosome"/>
    <property type="evidence" value="ECO:0007669"/>
    <property type="project" value="InterPro"/>
</dbReference>
<dbReference type="GO" id="GO:0006412">
    <property type="term" value="P:translation"/>
    <property type="evidence" value="ECO:0007669"/>
    <property type="project" value="UniProtKB-UniRule"/>
</dbReference>
<dbReference type="FunFam" id="2.40.50.100:FF:000060">
    <property type="entry name" value="Apicoplast ribosomal protein L27"/>
    <property type="match status" value="1"/>
</dbReference>
<dbReference type="Gene3D" id="2.40.50.100">
    <property type="match status" value="1"/>
</dbReference>
<dbReference type="HAMAP" id="MF_00539">
    <property type="entry name" value="Ribosomal_bL27"/>
    <property type="match status" value="1"/>
</dbReference>
<dbReference type="InterPro" id="IPR001684">
    <property type="entry name" value="Ribosomal_bL27"/>
</dbReference>
<dbReference type="InterPro" id="IPR018261">
    <property type="entry name" value="Ribosomal_bL27_CS"/>
</dbReference>
<dbReference type="NCBIfam" id="TIGR00062">
    <property type="entry name" value="L27"/>
    <property type="match status" value="1"/>
</dbReference>
<dbReference type="PANTHER" id="PTHR15893:SF0">
    <property type="entry name" value="LARGE RIBOSOMAL SUBUNIT PROTEIN BL27M"/>
    <property type="match status" value="1"/>
</dbReference>
<dbReference type="PANTHER" id="PTHR15893">
    <property type="entry name" value="RIBOSOMAL PROTEIN L27"/>
    <property type="match status" value="1"/>
</dbReference>
<dbReference type="Pfam" id="PF01016">
    <property type="entry name" value="Ribosomal_L27"/>
    <property type="match status" value="1"/>
</dbReference>
<dbReference type="PRINTS" id="PR00063">
    <property type="entry name" value="RIBOSOMALL27"/>
</dbReference>
<dbReference type="SUPFAM" id="SSF110324">
    <property type="entry name" value="Ribosomal L27 protein-like"/>
    <property type="match status" value="1"/>
</dbReference>
<dbReference type="PROSITE" id="PS00831">
    <property type="entry name" value="RIBOSOMAL_L27"/>
    <property type="match status" value="1"/>
</dbReference>
<evidence type="ECO:0000250" key="1">
    <source>
        <dbReference type="UniProtKB" id="Q2FXT0"/>
    </source>
</evidence>
<evidence type="ECO:0000255" key="2">
    <source>
        <dbReference type="HAMAP-Rule" id="MF_00539"/>
    </source>
</evidence>
<evidence type="ECO:0000305" key="3"/>
<sequence>MKKIWFHLDLQFFASKKGVGSTKNGRDSNPKFLGAKLADGQQAKTGQIIYRQRGNKIWPGKNVGQGKDDTLFALADGIVRYTKFLGNKTKVSVVEQSK</sequence>
<gene>
    <name evidence="2" type="primary">rpmA</name>
    <name type="ordered locus">MYCGA3690</name>
    <name type="ORF">MGA_1292</name>
</gene>
<reference key="1">
    <citation type="journal article" date="2003" name="Microbiology">
        <title>The complete genome sequence of the avian pathogen Mycoplasma gallisepticum strain R(low).</title>
        <authorList>
            <person name="Papazisi L."/>
            <person name="Gorton T.S."/>
            <person name="Kutish G."/>
            <person name="Markham P.F."/>
            <person name="Browning G.F."/>
            <person name="Nguyen D.K."/>
            <person name="Swartzell S."/>
            <person name="Madan A."/>
            <person name="Mahairas G."/>
            <person name="Geary S.J."/>
        </authorList>
    </citation>
    <scope>NUCLEOTIDE SEQUENCE [LARGE SCALE GENOMIC DNA]</scope>
    <source>
        <strain>R(low / passage 15 / clone 2)</strain>
    </source>
</reference>
<organism>
    <name type="scientific">Mycoplasmoides gallisepticum (strain R(low / passage 15 / clone 2))</name>
    <name type="common">Mycoplasma gallisepticum</name>
    <dbReference type="NCBI Taxonomy" id="710127"/>
    <lineage>
        <taxon>Bacteria</taxon>
        <taxon>Bacillati</taxon>
        <taxon>Mycoplasmatota</taxon>
        <taxon>Mycoplasmoidales</taxon>
        <taxon>Mycoplasmoidaceae</taxon>
        <taxon>Mycoplasmoides</taxon>
    </lineage>
</organism>
<proteinExistence type="inferred from homology"/>
<keyword id="KW-1185">Reference proteome</keyword>
<keyword id="KW-0687">Ribonucleoprotein</keyword>
<keyword id="KW-0689">Ribosomal protein</keyword>
<comment type="PTM">
    <text evidence="1">The N-terminus is cleaved by ribosomal processing cysteine protease Prp.</text>
</comment>
<comment type="similarity">
    <text evidence="2">Belongs to the bacterial ribosomal protein bL27 family.</text>
</comment>